<proteinExistence type="inferred from homology"/>
<feature type="chain" id="PRO_0000351593" description="Autoinducer-2 kinase">
    <location>
        <begin position="1"/>
        <end position="532"/>
    </location>
</feature>
<sequence>MSYLLALDAGTGSIRAVIFDLNGRQLAVGQAEWKHLSVDNVPGSMEFDLTTNWQLACQCIRQALDAARLSAADIQSVACCSMREGIVLYDRNGEAIWACANVDARASREVAELKEIHDFRFESEVYEVSGQTLALSAMPRLLWLAHHRPDIYRKAATITMISDWLAAKLSGELAVDPSNAGTTGMLDLFSRDWRPALLDMAGLRADMLSPVKETGTLLGAVTEAAAQQSGLRAGTPVVMGGGDVQLGCLGLGVVRAGQTAVLGGTFWQQVVNLPQVRTDPQMNIRVNPHVIPGMAQAESISFFTGLTMRWFRDAFCAEEKLIAERLGVDAYSLLEEMASRVPAGSHGVMPIFSDAMHFKQWYHAAPSFINLSIDPEKCNKATLFRALEENAAIVSACNLAQISQFSGVTFESLVFAGGGSKGALWSQILSDVTGLPVRVPVVREATALGCAIAAGTGAGLYDDMASTGERLVSWHREFTPNPQHRELYQEMMSKWQTVYADQLGLVDSGLTTSMWQAPGLERRQRVASSPSP</sequence>
<reference key="1">
    <citation type="submission" date="2006-09" db="EMBL/GenBank/DDBJ databases">
        <authorList>
            <consortium name="The Klebsiella pneumonia Genome Sequencing Project"/>
            <person name="McClelland M."/>
            <person name="Sanderson E.K."/>
            <person name="Spieth J."/>
            <person name="Clifton W.S."/>
            <person name="Latreille P."/>
            <person name="Sabo A."/>
            <person name="Pepin K."/>
            <person name="Bhonagiri V."/>
            <person name="Porwollik S."/>
            <person name="Ali J."/>
            <person name="Wilson R.K."/>
        </authorList>
    </citation>
    <scope>NUCLEOTIDE SEQUENCE [LARGE SCALE GENOMIC DNA]</scope>
    <source>
        <strain>ATCC 700721 / MGH 78578</strain>
    </source>
</reference>
<keyword id="KW-0963">Cytoplasm</keyword>
<keyword id="KW-0418">Kinase</keyword>
<keyword id="KW-0808">Transferase</keyword>
<dbReference type="EC" id="2.7.1.189" evidence="1"/>
<dbReference type="EMBL" id="CP000647">
    <property type="protein sequence ID" value="ABR78904.1"/>
    <property type="molecule type" value="Genomic_DNA"/>
</dbReference>
<dbReference type="RefSeq" id="WP_015959045.1">
    <property type="nucleotide sequence ID" value="NC_009648.1"/>
</dbReference>
<dbReference type="SMR" id="A6TEC0"/>
<dbReference type="STRING" id="272620.KPN_03509"/>
<dbReference type="jPOST" id="A6TEC0"/>
<dbReference type="PaxDb" id="272620-KPN_03509"/>
<dbReference type="DNASU" id="5341441"/>
<dbReference type="EnsemblBacteria" id="ABR78904">
    <property type="protein sequence ID" value="ABR78904"/>
    <property type="gene ID" value="KPN_03509"/>
</dbReference>
<dbReference type="KEGG" id="kpn:KPN_03509"/>
<dbReference type="HOGENOM" id="CLU_009281_3_4_6"/>
<dbReference type="Proteomes" id="UP000000265">
    <property type="component" value="Chromosome"/>
</dbReference>
<dbReference type="GO" id="GO:0005737">
    <property type="term" value="C:cytoplasm"/>
    <property type="evidence" value="ECO:0007669"/>
    <property type="project" value="UniProtKB-SubCell"/>
</dbReference>
<dbReference type="GO" id="GO:0071518">
    <property type="term" value="F:autoinducer-2 kinase activity"/>
    <property type="evidence" value="ECO:0007669"/>
    <property type="project" value="UniProtKB-UniRule"/>
</dbReference>
<dbReference type="GO" id="GO:0005975">
    <property type="term" value="P:carbohydrate metabolic process"/>
    <property type="evidence" value="ECO:0007669"/>
    <property type="project" value="InterPro"/>
</dbReference>
<dbReference type="GO" id="GO:0009372">
    <property type="term" value="P:quorum sensing"/>
    <property type="evidence" value="ECO:0007669"/>
    <property type="project" value="InterPro"/>
</dbReference>
<dbReference type="CDD" id="cd07775">
    <property type="entry name" value="ASKHA_NBD_FGGY_AI-2K"/>
    <property type="match status" value="1"/>
</dbReference>
<dbReference type="Gene3D" id="3.30.420.40">
    <property type="match status" value="2"/>
</dbReference>
<dbReference type="HAMAP" id="MF_02053">
    <property type="entry name" value="LsrK"/>
    <property type="match status" value="1"/>
</dbReference>
<dbReference type="InterPro" id="IPR033676">
    <property type="entry name" value="AI-2_kinase"/>
</dbReference>
<dbReference type="InterPro" id="IPR043129">
    <property type="entry name" value="ATPase_NBD"/>
</dbReference>
<dbReference type="InterPro" id="IPR000577">
    <property type="entry name" value="Carb_kinase_FGGY"/>
</dbReference>
<dbReference type="InterPro" id="IPR018485">
    <property type="entry name" value="FGGY_C"/>
</dbReference>
<dbReference type="InterPro" id="IPR050406">
    <property type="entry name" value="FGGY_Carb_Kinase"/>
</dbReference>
<dbReference type="InterPro" id="IPR018484">
    <property type="entry name" value="FGGY_N"/>
</dbReference>
<dbReference type="NCBIfam" id="NF008187">
    <property type="entry name" value="PRK10939.1"/>
    <property type="match status" value="1"/>
</dbReference>
<dbReference type="PANTHER" id="PTHR43095:SF1">
    <property type="entry name" value="AUTOINDUCER-2 KINASE"/>
    <property type="match status" value="1"/>
</dbReference>
<dbReference type="PANTHER" id="PTHR43095">
    <property type="entry name" value="SUGAR KINASE"/>
    <property type="match status" value="1"/>
</dbReference>
<dbReference type="Pfam" id="PF02782">
    <property type="entry name" value="FGGY_C"/>
    <property type="match status" value="1"/>
</dbReference>
<dbReference type="Pfam" id="PF00370">
    <property type="entry name" value="FGGY_N"/>
    <property type="match status" value="1"/>
</dbReference>
<dbReference type="PIRSF" id="PIRSF000538">
    <property type="entry name" value="GlpK"/>
    <property type="match status" value="1"/>
</dbReference>
<dbReference type="SUPFAM" id="SSF53067">
    <property type="entry name" value="Actin-like ATPase domain"/>
    <property type="match status" value="2"/>
</dbReference>
<name>LSRK_KLEP7</name>
<comment type="function">
    <text evidence="1">Catalyzes the phosphorylation of autoinducer-2 (AI-2) to phospho-AI-2, which subsequently inactivates the transcriptional regulator LsrR and leads to the transcription of the lsr operon. Phosphorylates the ring-open form of (S)-4,5-dihydroxypentane-2,3-dione (DPD), which is the precursor to all AI-2 signaling molecules, at the C5 position.</text>
</comment>
<comment type="catalytic activity">
    <reaction evidence="1">
        <text>(S)-4,5-dihydroxypentane-2,3-dione + ATP = (2S)-2-hydroxy-3,4-dioxopentyl phosphate + ADP + H(+)</text>
        <dbReference type="Rhea" id="RHEA:15377"/>
        <dbReference type="ChEBI" id="CHEBI:15378"/>
        <dbReference type="ChEBI" id="CHEBI:29484"/>
        <dbReference type="ChEBI" id="CHEBI:30616"/>
        <dbReference type="ChEBI" id="CHEBI:71677"/>
        <dbReference type="ChEBI" id="CHEBI:456216"/>
        <dbReference type="EC" id="2.7.1.189"/>
    </reaction>
</comment>
<comment type="subcellular location">
    <subcellularLocation>
        <location evidence="1">Cytoplasm</location>
    </subcellularLocation>
</comment>
<comment type="similarity">
    <text evidence="1">Belongs to the FGGY kinase family.</text>
</comment>
<protein>
    <recommendedName>
        <fullName evidence="1">Autoinducer-2 kinase</fullName>
        <shortName evidence="1">AI-2 kinase</shortName>
        <ecNumber evidence="1">2.7.1.189</ecNumber>
    </recommendedName>
</protein>
<accession>A6TEC0</accession>
<gene>
    <name evidence="1" type="primary">lsrK</name>
    <name type="ordered locus">KPN78578_34800</name>
    <name type="ORF">KPN_03509</name>
</gene>
<organism>
    <name type="scientific">Klebsiella pneumoniae subsp. pneumoniae (strain ATCC 700721 / MGH 78578)</name>
    <dbReference type="NCBI Taxonomy" id="272620"/>
    <lineage>
        <taxon>Bacteria</taxon>
        <taxon>Pseudomonadati</taxon>
        <taxon>Pseudomonadota</taxon>
        <taxon>Gammaproteobacteria</taxon>
        <taxon>Enterobacterales</taxon>
        <taxon>Enterobacteriaceae</taxon>
        <taxon>Klebsiella/Raoultella group</taxon>
        <taxon>Klebsiella</taxon>
        <taxon>Klebsiella pneumoniae complex</taxon>
    </lineage>
</organism>
<evidence type="ECO:0000255" key="1">
    <source>
        <dbReference type="HAMAP-Rule" id="MF_02053"/>
    </source>
</evidence>